<gene>
    <name type="primary">flgH</name>
    <name type="ordered locus">BPSL0276</name>
</gene>
<evidence type="ECO:0000250" key="1"/>
<evidence type="ECO:0000255" key="2"/>
<evidence type="ECO:0000305" key="3"/>
<organism>
    <name type="scientific">Burkholderia pseudomallei (strain K96243)</name>
    <dbReference type="NCBI Taxonomy" id="272560"/>
    <lineage>
        <taxon>Bacteria</taxon>
        <taxon>Pseudomonadati</taxon>
        <taxon>Pseudomonadota</taxon>
        <taxon>Betaproteobacteria</taxon>
        <taxon>Burkholderiales</taxon>
        <taxon>Burkholderiaceae</taxon>
        <taxon>Burkholderia</taxon>
        <taxon>pseudomallei group</taxon>
    </lineage>
</organism>
<keyword id="KW-0975">Bacterial flagellum</keyword>
<keyword id="KW-0998">Cell outer membrane</keyword>
<keyword id="KW-0472">Membrane</keyword>
<keyword id="KW-1185">Reference proteome</keyword>
<keyword id="KW-0732">Signal</keyword>
<accession>Q63YB2</accession>
<dbReference type="EMBL" id="BX571965">
    <property type="protein sequence ID" value="CAH34264.1"/>
    <property type="molecule type" value="Genomic_DNA"/>
</dbReference>
<dbReference type="RefSeq" id="WP_004523041.1">
    <property type="nucleotide sequence ID" value="NZ_CP009538.1"/>
</dbReference>
<dbReference type="RefSeq" id="YP_106903.1">
    <property type="nucleotide sequence ID" value="NC_006350.1"/>
</dbReference>
<dbReference type="SMR" id="Q63YB2"/>
<dbReference type="STRING" id="272560.BPSL0276"/>
<dbReference type="KEGG" id="bps:BPSL0276"/>
<dbReference type="PATRIC" id="fig|272560.51.peg.1429"/>
<dbReference type="eggNOG" id="COG2063">
    <property type="taxonomic scope" value="Bacteria"/>
</dbReference>
<dbReference type="Proteomes" id="UP000000605">
    <property type="component" value="Chromosome 1"/>
</dbReference>
<dbReference type="GO" id="GO:0009427">
    <property type="term" value="C:bacterial-type flagellum basal body, distal rod, L ring"/>
    <property type="evidence" value="ECO:0007669"/>
    <property type="project" value="InterPro"/>
</dbReference>
<dbReference type="GO" id="GO:0009279">
    <property type="term" value="C:cell outer membrane"/>
    <property type="evidence" value="ECO:0007669"/>
    <property type="project" value="UniProtKB-SubCell"/>
</dbReference>
<dbReference type="GO" id="GO:0003774">
    <property type="term" value="F:cytoskeletal motor activity"/>
    <property type="evidence" value="ECO:0007669"/>
    <property type="project" value="InterPro"/>
</dbReference>
<dbReference type="GO" id="GO:0071973">
    <property type="term" value="P:bacterial-type flagellum-dependent cell motility"/>
    <property type="evidence" value="ECO:0007669"/>
    <property type="project" value="InterPro"/>
</dbReference>
<dbReference type="HAMAP" id="MF_00415">
    <property type="entry name" value="FlgH"/>
    <property type="match status" value="1"/>
</dbReference>
<dbReference type="InterPro" id="IPR000527">
    <property type="entry name" value="Flag_Lring"/>
</dbReference>
<dbReference type="NCBIfam" id="NF009337">
    <property type="entry name" value="PRK12697.1"/>
    <property type="match status" value="1"/>
</dbReference>
<dbReference type="PANTHER" id="PTHR34933">
    <property type="entry name" value="FLAGELLAR L-RING PROTEIN"/>
    <property type="match status" value="1"/>
</dbReference>
<dbReference type="PANTHER" id="PTHR34933:SF3">
    <property type="entry name" value="FLAGELLAR L-RING PROTEIN"/>
    <property type="match status" value="1"/>
</dbReference>
<dbReference type="Pfam" id="PF02107">
    <property type="entry name" value="FlgH"/>
    <property type="match status" value="1"/>
</dbReference>
<dbReference type="PRINTS" id="PR01008">
    <property type="entry name" value="FLGLRINGFLGH"/>
</dbReference>
<proteinExistence type="inferred from homology"/>
<reference key="1">
    <citation type="journal article" date="2004" name="Proc. Natl. Acad. Sci. U.S.A.">
        <title>Genomic plasticity of the causative agent of melioidosis, Burkholderia pseudomallei.</title>
        <authorList>
            <person name="Holden M.T.G."/>
            <person name="Titball R.W."/>
            <person name="Peacock S.J."/>
            <person name="Cerdeno-Tarraga A.-M."/>
            <person name="Atkins T."/>
            <person name="Crossman L.C."/>
            <person name="Pitt T."/>
            <person name="Churcher C."/>
            <person name="Mungall K.L."/>
            <person name="Bentley S.D."/>
            <person name="Sebaihia M."/>
            <person name="Thomson N.R."/>
            <person name="Bason N."/>
            <person name="Beacham I.R."/>
            <person name="Brooks K."/>
            <person name="Brown K.A."/>
            <person name="Brown N.F."/>
            <person name="Challis G.L."/>
            <person name="Cherevach I."/>
            <person name="Chillingworth T."/>
            <person name="Cronin A."/>
            <person name="Crossett B."/>
            <person name="Davis P."/>
            <person name="DeShazer D."/>
            <person name="Feltwell T."/>
            <person name="Fraser A."/>
            <person name="Hance Z."/>
            <person name="Hauser H."/>
            <person name="Holroyd S."/>
            <person name="Jagels K."/>
            <person name="Keith K.E."/>
            <person name="Maddison M."/>
            <person name="Moule S."/>
            <person name="Price C."/>
            <person name="Quail M.A."/>
            <person name="Rabbinowitsch E."/>
            <person name="Rutherford K."/>
            <person name="Sanders M."/>
            <person name="Simmonds M."/>
            <person name="Songsivilai S."/>
            <person name="Stevens K."/>
            <person name="Tumapa S."/>
            <person name="Vesaratchavest M."/>
            <person name="Whitehead S."/>
            <person name="Yeats C."/>
            <person name="Barrell B.G."/>
            <person name="Oyston P.C.F."/>
            <person name="Parkhill J."/>
        </authorList>
    </citation>
    <scope>NUCLEOTIDE SEQUENCE [LARGE SCALE GENOMIC DNA]</scope>
    <source>
        <strain>K96243</strain>
    </source>
</reference>
<name>FLGH_BURPS</name>
<protein>
    <recommendedName>
        <fullName>Flagellar L-ring protein</fullName>
    </recommendedName>
    <alternativeName>
        <fullName>Basal body L-ring protein</fullName>
    </alternativeName>
</protein>
<feature type="signal peptide" evidence="2">
    <location>
        <begin position="1"/>
        <end position="35"/>
    </location>
</feature>
<feature type="chain" id="PRO_0000009435" description="Flagellar L-ring protein">
    <location>
        <begin position="36"/>
        <end position="240"/>
    </location>
</feature>
<comment type="function">
    <text evidence="1">Assembles around the rod to form the L-ring and probably protects the motor/basal body from shearing forces during rotation.</text>
</comment>
<comment type="subunit">
    <text evidence="1">The basal body constitutes a major portion of the flagellar organelle and consists of four rings (L,P,S, and M) mounted on a central rod.</text>
</comment>
<comment type="subcellular location">
    <subcellularLocation>
        <location evidence="1">Cell outer membrane</location>
    </subcellularLocation>
    <subcellularLocation>
        <location evidence="1">Bacterial flagellum basal body</location>
    </subcellularLocation>
</comment>
<comment type="similarity">
    <text evidence="3">Belongs to the FlgH family.</text>
</comment>
<sequence length="240" mass="25339">MKQVRFLPQPARRARAAAARRPGAAALAAAALALAGCAQIPREPITQQPMSAMPPMPPAMQAPGSIYNPGYAGRPLFEDQRPRNVGDILTIVIAENINATKSSGANTNRQGNTSFDVPTAGFLGGLFNKANLSAQGANKFAATGGASAANTFNGTITVTVTNVLPNGNLVVSGEKQMLINQGNEFVRFSGIVNPNTISGQNSVYSTQVADARIEYSAKGYINEAETMGWLQRFFLNIAPW</sequence>